<gene>
    <name evidence="1" type="primary">hisZ</name>
    <name type="ordered locus">BMA10229_A0072</name>
</gene>
<organism>
    <name type="scientific">Burkholderia mallei (strain NCTC 10229)</name>
    <dbReference type="NCBI Taxonomy" id="412022"/>
    <lineage>
        <taxon>Bacteria</taxon>
        <taxon>Pseudomonadati</taxon>
        <taxon>Pseudomonadota</taxon>
        <taxon>Betaproteobacteria</taxon>
        <taxon>Burkholderiales</taxon>
        <taxon>Burkholderiaceae</taxon>
        <taxon>Burkholderia</taxon>
        <taxon>pseudomallei group</taxon>
    </lineage>
</organism>
<name>HISZ_BURM9</name>
<proteinExistence type="inferred from homology"/>
<evidence type="ECO:0000255" key="1">
    <source>
        <dbReference type="HAMAP-Rule" id="MF_00125"/>
    </source>
</evidence>
<keyword id="KW-0028">Amino-acid biosynthesis</keyword>
<keyword id="KW-0963">Cytoplasm</keyword>
<keyword id="KW-0368">Histidine biosynthesis</keyword>
<comment type="function">
    <text evidence="1">Required for the first step of histidine biosynthesis. May allow the feedback regulation of ATP phosphoribosyltransferase activity by histidine.</text>
</comment>
<comment type="pathway">
    <text evidence="1">Amino-acid biosynthesis; L-histidine biosynthesis; L-histidine from 5-phospho-alpha-D-ribose 1-diphosphate: step 1/9.</text>
</comment>
<comment type="subunit">
    <text evidence="1">Heteromultimer composed of HisG and HisZ subunits.</text>
</comment>
<comment type="subcellular location">
    <subcellularLocation>
        <location evidence="1">Cytoplasm</location>
    </subcellularLocation>
</comment>
<comment type="miscellaneous">
    <text>This function is generally fulfilled by the C-terminal part of HisG, which is missing in some bacteria such as this one.</text>
</comment>
<comment type="similarity">
    <text evidence="1">Belongs to the class-II aminoacyl-tRNA synthetase family. HisZ subfamily.</text>
</comment>
<accession>A2S2B2</accession>
<feature type="chain" id="PRO_1000016251" description="ATP phosphoribosyltransferase regulatory subunit">
    <location>
        <begin position="1"/>
        <end position="382"/>
    </location>
</feature>
<reference key="1">
    <citation type="journal article" date="2010" name="Genome Biol. Evol.">
        <title>Continuing evolution of Burkholderia mallei through genome reduction and large-scale rearrangements.</title>
        <authorList>
            <person name="Losada L."/>
            <person name="Ronning C.M."/>
            <person name="DeShazer D."/>
            <person name="Woods D."/>
            <person name="Fedorova N."/>
            <person name="Kim H.S."/>
            <person name="Shabalina S.A."/>
            <person name="Pearson T.R."/>
            <person name="Brinkac L."/>
            <person name="Tan P."/>
            <person name="Nandi T."/>
            <person name="Crabtree J."/>
            <person name="Badger J."/>
            <person name="Beckstrom-Sternberg S."/>
            <person name="Saqib M."/>
            <person name="Schutzer S.E."/>
            <person name="Keim P."/>
            <person name="Nierman W.C."/>
        </authorList>
    </citation>
    <scope>NUCLEOTIDE SEQUENCE [LARGE SCALE GENOMIC DNA]</scope>
    <source>
        <strain>NCTC 10229</strain>
    </source>
</reference>
<sequence>MSTWLLPENIADVLPSEARKIEELRRRLLDRFRSYGYEMVMPPLLEYLESLLTSGGNELRLRTFKLVDQVSGRTLGLRADMTPQVARIDAHLLNRQGVTRLCYAGPVLHTRPRGLHASREQLQIGAEIYGHAGLEADQEIQQLMLDALHLTGLKKIRLDLCHAGVLAALFARDAAAAERGEALYEALAGKDVPRLNELTDDLGADTRAALRALPRLYGDASVLDDARRLLPALPEIARALDDLAHLAAQVKDAEVAIDLADLRGYAYHSGAMFAAYVDGVPNAVAHGGRYDHVGQAYGRARPATGFSLDLREIARISPVEARGAAILAPWKQDDALRAAVGALRDAGEVVIQALPGHDHVLDEFACDRALVERDGAWVIEPR</sequence>
<protein>
    <recommendedName>
        <fullName evidence="1">ATP phosphoribosyltransferase regulatory subunit</fullName>
    </recommendedName>
</protein>
<dbReference type="EMBL" id="CP000546">
    <property type="protein sequence ID" value="ABN02139.1"/>
    <property type="molecule type" value="Genomic_DNA"/>
</dbReference>
<dbReference type="RefSeq" id="WP_004192327.1">
    <property type="nucleotide sequence ID" value="NC_008836.1"/>
</dbReference>
<dbReference type="SMR" id="A2S2B2"/>
<dbReference type="KEGG" id="bml:BMA10229_A0072"/>
<dbReference type="HOGENOM" id="CLU_025113_0_1_4"/>
<dbReference type="UniPathway" id="UPA00031">
    <property type="reaction ID" value="UER00006"/>
</dbReference>
<dbReference type="Proteomes" id="UP000002283">
    <property type="component" value="Chromosome I"/>
</dbReference>
<dbReference type="GO" id="GO:0005737">
    <property type="term" value="C:cytoplasm"/>
    <property type="evidence" value="ECO:0007669"/>
    <property type="project" value="UniProtKB-SubCell"/>
</dbReference>
<dbReference type="GO" id="GO:0004821">
    <property type="term" value="F:histidine-tRNA ligase activity"/>
    <property type="evidence" value="ECO:0007669"/>
    <property type="project" value="TreeGrafter"/>
</dbReference>
<dbReference type="GO" id="GO:0006427">
    <property type="term" value="P:histidyl-tRNA aminoacylation"/>
    <property type="evidence" value="ECO:0007669"/>
    <property type="project" value="TreeGrafter"/>
</dbReference>
<dbReference type="GO" id="GO:0000105">
    <property type="term" value="P:L-histidine biosynthetic process"/>
    <property type="evidence" value="ECO:0007669"/>
    <property type="project" value="UniProtKB-UniRule"/>
</dbReference>
<dbReference type="CDD" id="cd00773">
    <property type="entry name" value="HisRS-like_core"/>
    <property type="match status" value="1"/>
</dbReference>
<dbReference type="Gene3D" id="3.30.930.10">
    <property type="entry name" value="Bira Bifunctional Protein, Domain 2"/>
    <property type="match status" value="1"/>
</dbReference>
<dbReference type="HAMAP" id="MF_00125">
    <property type="entry name" value="HisZ"/>
    <property type="match status" value="1"/>
</dbReference>
<dbReference type="InterPro" id="IPR045864">
    <property type="entry name" value="aa-tRNA-synth_II/BPL/LPL"/>
</dbReference>
<dbReference type="InterPro" id="IPR041715">
    <property type="entry name" value="HisRS-like_core"/>
</dbReference>
<dbReference type="InterPro" id="IPR004516">
    <property type="entry name" value="HisRS/HisZ"/>
</dbReference>
<dbReference type="InterPro" id="IPR004517">
    <property type="entry name" value="HisZ"/>
</dbReference>
<dbReference type="NCBIfam" id="TIGR00443">
    <property type="entry name" value="hisZ_biosyn_reg"/>
    <property type="match status" value="1"/>
</dbReference>
<dbReference type="NCBIfam" id="NF008935">
    <property type="entry name" value="PRK12292.1-1"/>
    <property type="match status" value="1"/>
</dbReference>
<dbReference type="NCBIfam" id="NF009086">
    <property type="entry name" value="PRK12421.1"/>
    <property type="match status" value="1"/>
</dbReference>
<dbReference type="PANTHER" id="PTHR43707:SF1">
    <property type="entry name" value="HISTIDINE--TRNA LIGASE, MITOCHONDRIAL-RELATED"/>
    <property type="match status" value="1"/>
</dbReference>
<dbReference type="PANTHER" id="PTHR43707">
    <property type="entry name" value="HISTIDYL-TRNA SYNTHETASE"/>
    <property type="match status" value="1"/>
</dbReference>
<dbReference type="Pfam" id="PF13393">
    <property type="entry name" value="tRNA-synt_His"/>
    <property type="match status" value="1"/>
</dbReference>
<dbReference type="PIRSF" id="PIRSF001549">
    <property type="entry name" value="His-tRNA_synth"/>
    <property type="match status" value="1"/>
</dbReference>
<dbReference type="SUPFAM" id="SSF55681">
    <property type="entry name" value="Class II aaRS and biotin synthetases"/>
    <property type="match status" value="1"/>
</dbReference>